<dbReference type="EC" id="2.4.2.18" evidence="1"/>
<dbReference type="EMBL" id="AE008384">
    <property type="protein sequence ID" value="AAM32516.1"/>
    <property type="molecule type" value="Genomic_DNA"/>
</dbReference>
<dbReference type="RefSeq" id="WP_011034728.1">
    <property type="nucleotide sequence ID" value="NC_003901.1"/>
</dbReference>
<dbReference type="SMR" id="Q8PT97"/>
<dbReference type="GeneID" id="82161908"/>
<dbReference type="KEGG" id="mma:MM_2820"/>
<dbReference type="PATRIC" id="fig|192952.21.peg.3255"/>
<dbReference type="eggNOG" id="arCOG02012">
    <property type="taxonomic scope" value="Archaea"/>
</dbReference>
<dbReference type="HOGENOM" id="CLU_034315_2_1_2"/>
<dbReference type="UniPathway" id="UPA00035">
    <property type="reaction ID" value="UER00041"/>
</dbReference>
<dbReference type="Proteomes" id="UP000000595">
    <property type="component" value="Chromosome"/>
</dbReference>
<dbReference type="GO" id="GO:0005829">
    <property type="term" value="C:cytosol"/>
    <property type="evidence" value="ECO:0007669"/>
    <property type="project" value="TreeGrafter"/>
</dbReference>
<dbReference type="GO" id="GO:0004048">
    <property type="term" value="F:anthranilate phosphoribosyltransferase activity"/>
    <property type="evidence" value="ECO:0007669"/>
    <property type="project" value="UniProtKB-UniRule"/>
</dbReference>
<dbReference type="GO" id="GO:0000287">
    <property type="term" value="F:magnesium ion binding"/>
    <property type="evidence" value="ECO:0007669"/>
    <property type="project" value="UniProtKB-UniRule"/>
</dbReference>
<dbReference type="GO" id="GO:0000162">
    <property type="term" value="P:L-tryptophan biosynthetic process"/>
    <property type="evidence" value="ECO:0007669"/>
    <property type="project" value="UniProtKB-UniRule"/>
</dbReference>
<dbReference type="FunFam" id="3.40.1030.10:FF:000002">
    <property type="entry name" value="Anthranilate phosphoribosyltransferase"/>
    <property type="match status" value="1"/>
</dbReference>
<dbReference type="Gene3D" id="3.40.1030.10">
    <property type="entry name" value="Nucleoside phosphorylase/phosphoribosyltransferase catalytic domain"/>
    <property type="match status" value="1"/>
</dbReference>
<dbReference type="Gene3D" id="1.20.970.10">
    <property type="entry name" value="Transferase, Pyrimidine Nucleoside Phosphorylase, Chain C"/>
    <property type="match status" value="1"/>
</dbReference>
<dbReference type="HAMAP" id="MF_00211">
    <property type="entry name" value="TrpD"/>
    <property type="match status" value="1"/>
</dbReference>
<dbReference type="InterPro" id="IPR005940">
    <property type="entry name" value="Anthranilate_Pribosyl_Tfrase"/>
</dbReference>
<dbReference type="InterPro" id="IPR000312">
    <property type="entry name" value="Glycosyl_Trfase_fam3"/>
</dbReference>
<dbReference type="InterPro" id="IPR017459">
    <property type="entry name" value="Glycosyl_Trfase_fam3_N_dom"/>
</dbReference>
<dbReference type="InterPro" id="IPR036320">
    <property type="entry name" value="Glycosyl_Trfase_fam3_N_dom_sf"/>
</dbReference>
<dbReference type="InterPro" id="IPR035902">
    <property type="entry name" value="Nuc_phospho_transferase"/>
</dbReference>
<dbReference type="NCBIfam" id="TIGR01245">
    <property type="entry name" value="trpD"/>
    <property type="match status" value="1"/>
</dbReference>
<dbReference type="PANTHER" id="PTHR43285">
    <property type="entry name" value="ANTHRANILATE PHOSPHORIBOSYLTRANSFERASE"/>
    <property type="match status" value="1"/>
</dbReference>
<dbReference type="PANTHER" id="PTHR43285:SF2">
    <property type="entry name" value="ANTHRANILATE PHOSPHORIBOSYLTRANSFERASE"/>
    <property type="match status" value="1"/>
</dbReference>
<dbReference type="Pfam" id="PF02885">
    <property type="entry name" value="Glycos_trans_3N"/>
    <property type="match status" value="1"/>
</dbReference>
<dbReference type="Pfam" id="PF00591">
    <property type="entry name" value="Glycos_transf_3"/>
    <property type="match status" value="1"/>
</dbReference>
<dbReference type="SUPFAM" id="SSF52418">
    <property type="entry name" value="Nucleoside phosphorylase/phosphoribosyltransferase catalytic domain"/>
    <property type="match status" value="1"/>
</dbReference>
<dbReference type="SUPFAM" id="SSF47648">
    <property type="entry name" value="Nucleoside phosphorylase/phosphoribosyltransferase N-terminal domain"/>
    <property type="match status" value="1"/>
</dbReference>
<sequence length="370" mass="39203">MQKIKEYIKKLEEGCDLSSEEAEAALEEVLSTAEDGEIETFLLALKAKGEKPQEIVGFVRGMKKAGNMIKPNTPFRIVDTCGTGGDGLNTINVSTAAAIVTAAAGVPVAKHGNRAATSMTGSSDVLEALGIKVDLSPEYVRKTIEKIGIGFMFAPVFHPAMKRVAGVRKKLGVRTVFNILGPLTNPAGAKGQVVGVFDKNLCEPIAYALAELGTEHALVVHGDGMDEITNTGETYVAELKNGKVSTYTLTPESLGMLRASPGDTKGGSPKENARDLLCIFKGQKGPKRDLIILNAAAALYVSGIVGSIRQAIPIAEDAIDSGKVMVKFNQFRTFTGEFYQIDKKQGFIPGKTALSPSRVSMLSPASGEQA</sequence>
<feature type="chain" id="PRO_0000154514" description="Anthranilate phosphoribosyltransferase">
    <location>
        <begin position="1"/>
        <end position="370"/>
    </location>
</feature>
<feature type="binding site" evidence="1">
    <location>
        <position position="82"/>
    </location>
    <ligand>
        <name>5-phospho-alpha-D-ribose 1-diphosphate</name>
        <dbReference type="ChEBI" id="CHEBI:58017"/>
    </ligand>
</feature>
<feature type="binding site" evidence="1">
    <location>
        <position position="82"/>
    </location>
    <ligand>
        <name>anthranilate</name>
        <dbReference type="ChEBI" id="CHEBI:16567"/>
        <label>1</label>
    </ligand>
</feature>
<feature type="binding site" evidence="1">
    <location>
        <begin position="85"/>
        <end position="86"/>
    </location>
    <ligand>
        <name>5-phospho-alpha-D-ribose 1-diphosphate</name>
        <dbReference type="ChEBI" id="CHEBI:58017"/>
    </ligand>
</feature>
<feature type="binding site" evidence="1">
    <location>
        <position position="90"/>
    </location>
    <ligand>
        <name>5-phospho-alpha-D-ribose 1-diphosphate</name>
        <dbReference type="ChEBI" id="CHEBI:58017"/>
    </ligand>
</feature>
<feature type="binding site" evidence="1">
    <location>
        <begin position="92"/>
        <end position="95"/>
    </location>
    <ligand>
        <name>5-phospho-alpha-D-ribose 1-diphosphate</name>
        <dbReference type="ChEBI" id="CHEBI:58017"/>
    </ligand>
</feature>
<feature type="binding site" evidence="1">
    <location>
        <position position="94"/>
    </location>
    <ligand>
        <name>Mg(2+)</name>
        <dbReference type="ChEBI" id="CHEBI:18420"/>
        <label>1</label>
    </ligand>
</feature>
<feature type="binding site" evidence="1">
    <location>
        <begin position="110"/>
        <end position="118"/>
    </location>
    <ligand>
        <name>5-phospho-alpha-D-ribose 1-diphosphate</name>
        <dbReference type="ChEBI" id="CHEBI:58017"/>
    </ligand>
</feature>
<feature type="binding site" evidence="1">
    <location>
        <position position="113"/>
    </location>
    <ligand>
        <name>anthranilate</name>
        <dbReference type="ChEBI" id="CHEBI:16567"/>
        <label>1</label>
    </ligand>
</feature>
<feature type="binding site" evidence="1">
    <location>
        <position position="122"/>
    </location>
    <ligand>
        <name>5-phospho-alpha-D-ribose 1-diphosphate</name>
        <dbReference type="ChEBI" id="CHEBI:58017"/>
    </ligand>
</feature>
<feature type="binding site" evidence="1">
    <location>
        <position position="168"/>
    </location>
    <ligand>
        <name>anthranilate</name>
        <dbReference type="ChEBI" id="CHEBI:16567"/>
        <label>2</label>
    </ligand>
</feature>
<feature type="binding site" evidence="1">
    <location>
        <position position="226"/>
    </location>
    <ligand>
        <name>Mg(2+)</name>
        <dbReference type="ChEBI" id="CHEBI:18420"/>
        <label>2</label>
    </ligand>
</feature>
<feature type="binding site" evidence="1">
    <location>
        <position position="227"/>
    </location>
    <ligand>
        <name>Mg(2+)</name>
        <dbReference type="ChEBI" id="CHEBI:18420"/>
        <label>1</label>
    </ligand>
</feature>
<feature type="binding site" evidence="1">
    <location>
        <position position="227"/>
    </location>
    <ligand>
        <name>Mg(2+)</name>
        <dbReference type="ChEBI" id="CHEBI:18420"/>
        <label>2</label>
    </ligand>
</feature>
<protein>
    <recommendedName>
        <fullName evidence="1">Anthranilate phosphoribosyltransferase</fullName>
        <ecNumber evidence="1">2.4.2.18</ecNumber>
    </recommendedName>
</protein>
<proteinExistence type="inferred from homology"/>
<evidence type="ECO:0000255" key="1">
    <source>
        <dbReference type="HAMAP-Rule" id="MF_00211"/>
    </source>
</evidence>
<organism>
    <name type="scientific">Methanosarcina mazei (strain ATCC BAA-159 / DSM 3647 / Goe1 / Go1 / JCM 11833 / OCM 88)</name>
    <name type="common">Methanosarcina frisia</name>
    <dbReference type="NCBI Taxonomy" id="192952"/>
    <lineage>
        <taxon>Archaea</taxon>
        <taxon>Methanobacteriati</taxon>
        <taxon>Methanobacteriota</taxon>
        <taxon>Stenosarchaea group</taxon>
        <taxon>Methanomicrobia</taxon>
        <taxon>Methanosarcinales</taxon>
        <taxon>Methanosarcinaceae</taxon>
        <taxon>Methanosarcina</taxon>
    </lineage>
</organism>
<gene>
    <name evidence="1" type="primary">trpD</name>
    <name type="ordered locus">MM_2820</name>
</gene>
<comment type="function">
    <text evidence="1">Catalyzes the transfer of the phosphoribosyl group of 5-phosphorylribose-1-pyrophosphate (PRPP) to anthranilate to yield N-(5'-phosphoribosyl)-anthranilate (PRA).</text>
</comment>
<comment type="catalytic activity">
    <reaction evidence="1">
        <text>N-(5-phospho-beta-D-ribosyl)anthranilate + diphosphate = 5-phospho-alpha-D-ribose 1-diphosphate + anthranilate</text>
        <dbReference type="Rhea" id="RHEA:11768"/>
        <dbReference type="ChEBI" id="CHEBI:16567"/>
        <dbReference type="ChEBI" id="CHEBI:18277"/>
        <dbReference type="ChEBI" id="CHEBI:33019"/>
        <dbReference type="ChEBI" id="CHEBI:58017"/>
        <dbReference type="EC" id="2.4.2.18"/>
    </reaction>
</comment>
<comment type="cofactor">
    <cofactor evidence="1">
        <name>Mg(2+)</name>
        <dbReference type="ChEBI" id="CHEBI:18420"/>
    </cofactor>
    <text evidence="1">Binds 2 magnesium ions per monomer.</text>
</comment>
<comment type="pathway">
    <text evidence="1">Amino-acid biosynthesis; L-tryptophan biosynthesis; L-tryptophan from chorismate: step 2/5.</text>
</comment>
<comment type="subunit">
    <text evidence="1">Homodimer.</text>
</comment>
<comment type="similarity">
    <text evidence="1">Belongs to the anthranilate phosphoribosyltransferase family.</text>
</comment>
<reference key="1">
    <citation type="journal article" date="2002" name="J. Mol. Microbiol. Biotechnol.">
        <title>The genome of Methanosarcina mazei: evidence for lateral gene transfer between Bacteria and Archaea.</title>
        <authorList>
            <person name="Deppenmeier U."/>
            <person name="Johann A."/>
            <person name="Hartsch T."/>
            <person name="Merkl R."/>
            <person name="Schmitz R.A."/>
            <person name="Martinez-Arias R."/>
            <person name="Henne A."/>
            <person name="Wiezer A."/>
            <person name="Baeumer S."/>
            <person name="Jacobi C."/>
            <person name="Brueggemann H."/>
            <person name="Lienard T."/>
            <person name="Christmann A."/>
            <person name="Boemecke M."/>
            <person name="Steckel S."/>
            <person name="Bhattacharyya A."/>
            <person name="Lykidis A."/>
            <person name="Overbeek R."/>
            <person name="Klenk H.-P."/>
            <person name="Gunsalus R.P."/>
            <person name="Fritz H.-J."/>
            <person name="Gottschalk G."/>
        </authorList>
    </citation>
    <scope>NUCLEOTIDE SEQUENCE [LARGE SCALE GENOMIC DNA]</scope>
    <source>
        <strain>ATCC BAA-159 / DSM 3647 / Goe1 / Go1 / JCM 11833 / OCM 88</strain>
    </source>
</reference>
<name>TRPD_METMA</name>
<keyword id="KW-0028">Amino-acid biosynthesis</keyword>
<keyword id="KW-0057">Aromatic amino acid biosynthesis</keyword>
<keyword id="KW-0328">Glycosyltransferase</keyword>
<keyword id="KW-0460">Magnesium</keyword>
<keyword id="KW-0479">Metal-binding</keyword>
<keyword id="KW-0808">Transferase</keyword>
<keyword id="KW-0822">Tryptophan biosynthesis</keyword>
<accession>Q8PT97</accession>